<dbReference type="EC" id="4.2.1.11" evidence="1"/>
<dbReference type="EMBL" id="BA000035">
    <property type="protein sequence ID" value="BAC17852.1"/>
    <property type="molecule type" value="Genomic_DNA"/>
</dbReference>
<dbReference type="RefSeq" id="WP_011075256.1">
    <property type="nucleotide sequence ID" value="NC_004369.1"/>
</dbReference>
<dbReference type="SMR" id="Q8FQS7"/>
<dbReference type="STRING" id="196164.gene:10741449"/>
<dbReference type="KEGG" id="cef:CE1042"/>
<dbReference type="eggNOG" id="COG0148">
    <property type="taxonomic scope" value="Bacteria"/>
</dbReference>
<dbReference type="HOGENOM" id="CLU_031223_2_1_11"/>
<dbReference type="OrthoDB" id="9804716at2"/>
<dbReference type="UniPathway" id="UPA00109">
    <property type="reaction ID" value="UER00187"/>
</dbReference>
<dbReference type="Proteomes" id="UP000001409">
    <property type="component" value="Chromosome"/>
</dbReference>
<dbReference type="GO" id="GO:0009986">
    <property type="term" value="C:cell surface"/>
    <property type="evidence" value="ECO:0007669"/>
    <property type="project" value="UniProtKB-SubCell"/>
</dbReference>
<dbReference type="GO" id="GO:0005576">
    <property type="term" value="C:extracellular region"/>
    <property type="evidence" value="ECO:0007669"/>
    <property type="project" value="UniProtKB-SubCell"/>
</dbReference>
<dbReference type="GO" id="GO:0000015">
    <property type="term" value="C:phosphopyruvate hydratase complex"/>
    <property type="evidence" value="ECO:0007669"/>
    <property type="project" value="InterPro"/>
</dbReference>
<dbReference type="GO" id="GO:0000287">
    <property type="term" value="F:magnesium ion binding"/>
    <property type="evidence" value="ECO:0007669"/>
    <property type="project" value="UniProtKB-UniRule"/>
</dbReference>
<dbReference type="GO" id="GO:0004634">
    <property type="term" value="F:phosphopyruvate hydratase activity"/>
    <property type="evidence" value="ECO:0007669"/>
    <property type="project" value="UniProtKB-UniRule"/>
</dbReference>
<dbReference type="GO" id="GO:0006096">
    <property type="term" value="P:glycolytic process"/>
    <property type="evidence" value="ECO:0007669"/>
    <property type="project" value="UniProtKB-UniRule"/>
</dbReference>
<dbReference type="CDD" id="cd03313">
    <property type="entry name" value="enolase"/>
    <property type="match status" value="1"/>
</dbReference>
<dbReference type="FunFam" id="3.20.20.120:FF:000001">
    <property type="entry name" value="Enolase"/>
    <property type="match status" value="1"/>
</dbReference>
<dbReference type="FunFam" id="3.30.390.10:FF:000001">
    <property type="entry name" value="Enolase"/>
    <property type="match status" value="1"/>
</dbReference>
<dbReference type="Gene3D" id="3.20.20.120">
    <property type="entry name" value="Enolase-like C-terminal domain"/>
    <property type="match status" value="1"/>
</dbReference>
<dbReference type="Gene3D" id="3.30.390.10">
    <property type="entry name" value="Enolase-like, N-terminal domain"/>
    <property type="match status" value="1"/>
</dbReference>
<dbReference type="HAMAP" id="MF_00318">
    <property type="entry name" value="Enolase"/>
    <property type="match status" value="1"/>
</dbReference>
<dbReference type="InterPro" id="IPR000941">
    <property type="entry name" value="Enolase"/>
</dbReference>
<dbReference type="InterPro" id="IPR036849">
    <property type="entry name" value="Enolase-like_C_sf"/>
</dbReference>
<dbReference type="InterPro" id="IPR029017">
    <property type="entry name" value="Enolase-like_N"/>
</dbReference>
<dbReference type="InterPro" id="IPR020810">
    <property type="entry name" value="Enolase_C"/>
</dbReference>
<dbReference type="InterPro" id="IPR020809">
    <property type="entry name" value="Enolase_CS"/>
</dbReference>
<dbReference type="InterPro" id="IPR020811">
    <property type="entry name" value="Enolase_N"/>
</dbReference>
<dbReference type="NCBIfam" id="TIGR01060">
    <property type="entry name" value="eno"/>
    <property type="match status" value="1"/>
</dbReference>
<dbReference type="PANTHER" id="PTHR11902">
    <property type="entry name" value="ENOLASE"/>
    <property type="match status" value="1"/>
</dbReference>
<dbReference type="PANTHER" id="PTHR11902:SF1">
    <property type="entry name" value="ENOLASE"/>
    <property type="match status" value="1"/>
</dbReference>
<dbReference type="Pfam" id="PF00113">
    <property type="entry name" value="Enolase_C"/>
    <property type="match status" value="1"/>
</dbReference>
<dbReference type="Pfam" id="PF03952">
    <property type="entry name" value="Enolase_N"/>
    <property type="match status" value="1"/>
</dbReference>
<dbReference type="PIRSF" id="PIRSF001400">
    <property type="entry name" value="Enolase"/>
    <property type="match status" value="1"/>
</dbReference>
<dbReference type="PRINTS" id="PR00148">
    <property type="entry name" value="ENOLASE"/>
</dbReference>
<dbReference type="SFLD" id="SFLDS00001">
    <property type="entry name" value="Enolase"/>
    <property type="match status" value="1"/>
</dbReference>
<dbReference type="SFLD" id="SFLDF00002">
    <property type="entry name" value="enolase"/>
    <property type="match status" value="1"/>
</dbReference>
<dbReference type="SMART" id="SM01192">
    <property type="entry name" value="Enolase_C"/>
    <property type="match status" value="1"/>
</dbReference>
<dbReference type="SMART" id="SM01193">
    <property type="entry name" value="Enolase_N"/>
    <property type="match status" value="1"/>
</dbReference>
<dbReference type="SUPFAM" id="SSF51604">
    <property type="entry name" value="Enolase C-terminal domain-like"/>
    <property type="match status" value="1"/>
</dbReference>
<dbReference type="SUPFAM" id="SSF54826">
    <property type="entry name" value="Enolase N-terminal domain-like"/>
    <property type="match status" value="1"/>
</dbReference>
<dbReference type="PROSITE" id="PS00164">
    <property type="entry name" value="ENOLASE"/>
    <property type="match status" value="1"/>
</dbReference>
<feature type="chain" id="PRO_0000133875" description="Enolase">
    <location>
        <begin position="1"/>
        <end position="425"/>
    </location>
</feature>
<feature type="active site" description="Proton donor" evidence="1">
    <location>
        <position position="204"/>
    </location>
</feature>
<feature type="active site" description="Proton acceptor" evidence="1">
    <location>
        <position position="334"/>
    </location>
</feature>
<feature type="binding site" evidence="1">
    <location>
        <position position="162"/>
    </location>
    <ligand>
        <name>(2R)-2-phosphoglycerate</name>
        <dbReference type="ChEBI" id="CHEBI:58289"/>
    </ligand>
</feature>
<feature type="binding site" evidence="1">
    <location>
        <position position="241"/>
    </location>
    <ligand>
        <name>Mg(2+)</name>
        <dbReference type="ChEBI" id="CHEBI:18420"/>
    </ligand>
</feature>
<feature type="binding site" evidence="1">
    <location>
        <position position="282"/>
    </location>
    <ligand>
        <name>Mg(2+)</name>
        <dbReference type="ChEBI" id="CHEBI:18420"/>
    </ligand>
</feature>
<feature type="binding site" evidence="1">
    <location>
        <position position="309"/>
    </location>
    <ligand>
        <name>Mg(2+)</name>
        <dbReference type="ChEBI" id="CHEBI:18420"/>
    </ligand>
</feature>
<feature type="binding site" evidence="1">
    <location>
        <position position="334"/>
    </location>
    <ligand>
        <name>(2R)-2-phosphoglycerate</name>
        <dbReference type="ChEBI" id="CHEBI:58289"/>
    </ligand>
</feature>
<feature type="binding site" evidence="1">
    <location>
        <position position="363"/>
    </location>
    <ligand>
        <name>(2R)-2-phosphoglycerate</name>
        <dbReference type="ChEBI" id="CHEBI:58289"/>
    </ligand>
</feature>
<feature type="binding site" evidence="1">
    <location>
        <position position="364"/>
    </location>
    <ligand>
        <name>(2R)-2-phosphoglycerate</name>
        <dbReference type="ChEBI" id="CHEBI:58289"/>
    </ligand>
</feature>
<feature type="binding site" evidence="1">
    <location>
        <position position="385"/>
    </location>
    <ligand>
        <name>(2R)-2-phosphoglycerate</name>
        <dbReference type="ChEBI" id="CHEBI:58289"/>
    </ligand>
</feature>
<gene>
    <name evidence="1" type="primary">eno</name>
    <name type="ordered locus">CE1042</name>
</gene>
<sequence>MAEIMHVFAREIMDSRGNPTVEAEVFLDDGSHGVAGVPSGASTGVHEAHELRDGGDRYLGKGVLKAVENVNEEIGDELAGLEADDQRLIDAAMIKLDGTENKSRLGANAILGVSMAVAKAAADSAGLPLFRYIGGPNAHVLPVPMMNIINGGAHADSGVDVQEFMIAPIGFDSFSEALRAGAEVYHALKKVINEKGLSTGLGDEGGFAPSVESTRAALDLIVEAIKKAGFEPGKDIALALDVASSEFFKDGKYHFEGGEHTAEEMANVYAELVDEYPIVSIEDPLQEDDWDGYVALTAQIGDKVQIVGDDFFVTNPARLKEGIAKKAANSILVKVNQIGTLTETFDAVDMAHRAGYTSMMSHRSGETEDTTIADLAVALNCGQIKTGAPARSDRVAKYNQLLRIEQLLGDAAVYAGRSAFPRFQG</sequence>
<accession>Q8FQS7</accession>
<name>ENO_COREF</name>
<organism>
    <name type="scientific">Corynebacterium efficiens (strain DSM 44549 / YS-314 / AJ 12310 / JCM 11189 / NBRC 100395)</name>
    <dbReference type="NCBI Taxonomy" id="196164"/>
    <lineage>
        <taxon>Bacteria</taxon>
        <taxon>Bacillati</taxon>
        <taxon>Actinomycetota</taxon>
        <taxon>Actinomycetes</taxon>
        <taxon>Mycobacteriales</taxon>
        <taxon>Corynebacteriaceae</taxon>
        <taxon>Corynebacterium</taxon>
    </lineage>
</organism>
<reference key="1">
    <citation type="journal article" date="2003" name="Genome Res.">
        <title>Comparative complete genome sequence analysis of the amino acid replacements responsible for the thermostability of Corynebacterium efficiens.</title>
        <authorList>
            <person name="Nishio Y."/>
            <person name="Nakamura Y."/>
            <person name="Kawarabayasi Y."/>
            <person name="Usuda Y."/>
            <person name="Kimura E."/>
            <person name="Sugimoto S."/>
            <person name="Matsui K."/>
            <person name="Yamagishi A."/>
            <person name="Kikuchi H."/>
            <person name="Ikeo K."/>
            <person name="Gojobori T."/>
        </authorList>
    </citation>
    <scope>NUCLEOTIDE SEQUENCE [LARGE SCALE GENOMIC DNA]</scope>
    <source>
        <strain>DSM 44549 / YS-314 / AJ 12310 / JCM 11189 / NBRC 100395</strain>
    </source>
</reference>
<protein>
    <recommendedName>
        <fullName evidence="1">Enolase</fullName>
        <ecNumber evidence="1">4.2.1.11</ecNumber>
    </recommendedName>
    <alternativeName>
        <fullName evidence="1">2-phospho-D-glycerate hydro-lyase</fullName>
    </alternativeName>
    <alternativeName>
        <fullName evidence="1">2-phosphoglycerate dehydratase</fullName>
    </alternativeName>
</protein>
<proteinExistence type="inferred from homology"/>
<comment type="function">
    <text evidence="1">Catalyzes the reversible conversion of 2-phosphoglycerate (2-PG) into phosphoenolpyruvate (PEP). It is essential for the degradation of carbohydrates via glycolysis.</text>
</comment>
<comment type="catalytic activity">
    <reaction evidence="1">
        <text>(2R)-2-phosphoglycerate = phosphoenolpyruvate + H2O</text>
        <dbReference type="Rhea" id="RHEA:10164"/>
        <dbReference type="ChEBI" id="CHEBI:15377"/>
        <dbReference type="ChEBI" id="CHEBI:58289"/>
        <dbReference type="ChEBI" id="CHEBI:58702"/>
        <dbReference type="EC" id="4.2.1.11"/>
    </reaction>
</comment>
<comment type="cofactor">
    <cofactor evidence="1">
        <name>Mg(2+)</name>
        <dbReference type="ChEBI" id="CHEBI:18420"/>
    </cofactor>
    <text evidence="1">Binds a second Mg(2+) ion via substrate during catalysis.</text>
</comment>
<comment type="pathway">
    <text evidence="1">Carbohydrate degradation; glycolysis; pyruvate from D-glyceraldehyde 3-phosphate: step 4/5.</text>
</comment>
<comment type="subcellular location">
    <subcellularLocation>
        <location evidence="1">Cytoplasm</location>
    </subcellularLocation>
    <subcellularLocation>
        <location evidence="1">Secreted</location>
    </subcellularLocation>
    <subcellularLocation>
        <location evidence="1">Cell surface</location>
    </subcellularLocation>
    <text evidence="1">Fractions of enolase are present in both the cytoplasm and on the cell surface.</text>
</comment>
<comment type="similarity">
    <text evidence="1">Belongs to the enolase family.</text>
</comment>
<keyword id="KW-0963">Cytoplasm</keyword>
<keyword id="KW-0324">Glycolysis</keyword>
<keyword id="KW-0456">Lyase</keyword>
<keyword id="KW-0460">Magnesium</keyword>
<keyword id="KW-0479">Metal-binding</keyword>
<keyword id="KW-1185">Reference proteome</keyword>
<keyword id="KW-0964">Secreted</keyword>
<evidence type="ECO:0000255" key="1">
    <source>
        <dbReference type="HAMAP-Rule" id="MF_00318"/>
    </source>
</evidence>